<feature type="chain" id="PRO_0000175397" description="DNA-directed RNA polymerase subunit alpha">
    <location>
        <begin position="1"/>
        <end position="312"/>
    </location>
</feature>
<feature type="region of interest" description="Alpha N-terminal domain (alpha-NTD)" evidence="1">
    <location>
        <begin position="1"/>
        <end position="226"/>
    </location>
</feature>
<feature type="region of interest" description="Alpha C-terminal domain (alpha-CTD)" evidence="1">
    <location>
        <begin position="243"/>
        <end position="312"/>
    </location>
</feature>
<name>RPOA_STRP3</name>
<organism>
    <name type="scientific">Streptococcus pyogenes serotype M3 (strain ATCC BAA-595 / MGAS315)</name>
    <dbReference type="NCBI Taxonomy" id="198466"/>
    <lineage>
        <taxon>Bacteria</taxon>
        <taxon>Bacillati</taxon>
        <taxon>Bacillota</taxon>
        <taxon>Bacilli</taxon>
        <taxon>Lactobacillales</taxon>
        <taxon>Streptococcaceae</taxon>
        <taxon>Streptococcus</taxon>
    </lineage>
</organism>
<comment type="function">
    <text evidence="1">DNA-dependent RNA polymerase catalyzes the transcription of DNA into RNA using the four ribonucleoside triphosphates as substrates.</text>
</comment>
<comment type="catalytic activity">
    <reaction evidence="1">
        <text>RNA(n) + a ribonucleoside 5'-triphosphate = RNA(n+1) + diphosphate</text>
        <dbReference type="Rhea" id="RHEA:21248"/>
        <dbReference type="Rhea" id="RHEA-COMP:14527"/>
        <dbReference type="Rhea" id="RHEA-COMP:17342"/>
        <dbReference type="ChEBI" id="CHEBI:33019"/>
        <dbReference type="ChEBI" id="CHEBI:61557"/>
        <dbReference type="ChEBI" id="CHEBI:140395"/>
        <dbReference type="EC" id="2.7.7.6"/>
    </reaction>
</comment>
<comment type="subunit">
    <text evidence="1">Homodimer. The RNAP catalytic core consists of 2 alpha, 1 beta, 1 beta' and 1 omega subunit. When a sigma factor is associated with the core the holoenzyme is formed, which can initiate transcription.</text>
</comment>
<comment type="domain">
    <text evidence="1">The N-terminal domain is essential for RNAP assembly and basal transcription, whereas the C-terminal domain is involved in interaction with transcriptional regulators and with upstream promoter elements.</text>
</comment>
<comment type="similarity">
    <text evidence="1">Belongs to the RNA polymerase alpha chain family.</text>
</comment>
<protein>
    <recommendedName>
        <fullName evidence="1">DNA-directed RNA polymerase subunit alpha</fullName>
        <shortName evidence="1">RNAP subunit alpha</shortName>
        <ecNumber evidence="1">2.7.7.6</ecNumber>
    </recommendedName>
    <alternativeName>
        <fullName evidence="1">RNA polymerase subunit alpha</fullName>
    </alternativeName>
    <alternativeName>
        <fullName evidence="1">Transcriptase subunit alpha</fullName>
    </alternativeName>
</protein>
<sequence length="312" mass="34546">MIEFEKPIITKIDENKDYGRFVIEPLERGYGTTLGNSLRRVLLSSLPGAAVTSIKIDGVLHEFDTIPGVREDVMQIILNVKGLAVKSYVEDEKIIELEVEGPAEVTAGDILTDSDIELVNPDHYLFTIAEGHSLRATMTVAKKRGYVPAEGNKKDDAPVGTLAVDSIYTPVKKVNYQVEPARVGSNDGFDKLTIEIMTNGTIIPEDALGLSARVLIEHLNLFTDLTEVAKSTEVMKETEKVNDEKVLDRTIEELDLSVRSYNCLKRAGINTVFDLTEKSEPEMMKVRNLGRKSLEEVKVKLADLGLGLKNDK</sequence>
<gene>
    <name evidence="1" type="primary">rpoA</name>
    <name type="ordered locus">SpyM3_0066</name>
</gene>
<dbReference type="EC" id="2.7.7.6" evidence="1"/>
<dbReference type="EMBL" id="AE014074">
    <property type="protein sequence ID" value="AAM78673.1"/>
    <property type="molecule type" value="Genomic_DNA"/>
</dbReference>
<dbReference type="RefSeq" id="WP_011054107.1">
    <property type="nucleotide sequence ID" value="NC_004070.1"/>
</dbReference>
<dbReference type="SMR" id="P0DF28"/>
<dbReference type="KEGG" id="spg:SpyM3_0066"/>
<dbReference type="HOGENOM" id="CLU_053084_0_1_9"/>
<dbReference type="Proteomes" id="UP000000564">
    <property type="component" value="Chromosome"/>
</dbReference>
<dbReference type="GO" id="GO:0005737">
    <property type="term" value="C:cytoplasm"/>
    <property type="evidence" value="ECO:0007669"/>
    <property type="project" value="UniProtKB-ARBA"/>
</dbReference>
<dbReference type="GO" id="GO:0000428">
    <property type="term" value="C:DNA-directed RNA polymerase complex"/>
    <property type="evidence" value="ECO:0007669"/>
    <property type="project" value="UniProtKB-KW"/>
</dbReference>
<dbReference type="GO" id="GO:0003677">
    <property type="term" value="F:DNA binding"/>
    <property type="evidence" value="ECO:0007669"/>
    <property type="project" value="UniProtKB-UniRule"/>
</dbReference>
<dbReference type="GO" id="GO:0003899">
    <property type="term" value="F:DNA-directed RNA polymerase activity"/>
    <property type="evidence" value="ECO:0007669"/>
    <property type="project" value="UniProtKB-UniRule"/>
</dbReference>
<dbReference type="GO" id="GO:0046983">
    <property type="term" value="F:protein dimerization activity"/>
    <property type="evidence" value="ECO:0007669"/>
    <property type="project" value="InterPro"/>
</dbReference>
<dbReference type="GO" id="GO:0006351">
    <property type="term" value="P:DNA-templated transcription"/>
    <property type="evidence" value="ECO:0007669"/>
    <property type="project" value="UniProtKB-UniRule"/>
</dbReference>
<dbReference type="CDD" id="cd06928">
    <property type="entry name" value="RNAP_alpha_NTD"/>
    <property type="match status" value="1"/>
</dbReference>
<dbReference type="FunFam" id="1.10.150.20:FF:000001">
    <property type="entry name" value="DNA-directed RNA polymerase subunit alpha"/>
    <property type="match status" value="1"/>
</dbReference>
<dbReference type="FunFam" id="2.170.120.12:FF:000001">
    <property type="entry name" value="DNA-directed RNA polymerase subunit alpha"/>
    <property type="match status" value="1"/>
</dbReference>
<dbReference type="Gene3D" id="1.10.150.20">
    <property type="entry name" value="5' to 3' exonuclease, C-terminal subdomain"/>
    <property type="match status" value="1"/>
</dbReference>
<dbReference type="Gene3D" id="2.170.120.12">
    <property type="entry name" value="DNA-directed RNA polymerase, insert domain"/>
    <property type="match status" value="1"/>
</dbReference>
<dbReference type="Gene3D" id="3.30.1360.10">
    <property type="entry name" value="RNA polymerase, RBP11-like subunit"/>
    <property type="match status" value="1"/>
</dbReference>
<dbReference type="HAMAP" id="MF_00059">
    <property type="entry name" value="RNApol_bact_RpoA"/>
    <property type="match status" value="1"/>
</dbReference>
<dbReference type="InterPro" id="IPR011262">
    <property type="entry name" value="DNA-dir_RNA_pol_insert"/>
</dbReference>
<dbReference type="InterPro" id="IPR011263">
    <property type="entry name" value="DNA-dir_RNA_pol_RpoA/D/Rpb3"/>
</dbReference>
<dbReference type="InterPro" id="IPR011773">
    <property type="entry name" value="DNA-dir_RpoA"/>
</dbReference>
<dbReference type="InterPro" id="IPR036603">
    <property type="entry name" value="RBP11-like"/>
</dbReference>
<dbReference type="InterPro" id="IPR011260">
    <property type="entry name" value="RNAP_asu_C"/>
</dbReference>
<dbReference type="InterPro" id="IPR036643">
    <property type="entry name" value="RNApol_insert_sf"/>
</dbReference>
<dbReference type="NCBIfam" id="NF003513">
    <property type="entry name" value="PRK05182.1-2"/>
    <property type="match status" value="1"/>
</dbReference>
<dbReference type="NCBIfam" id="NF003515">
    <property type="entry name" value="PRK05182.2-1"/>
    <property type="match status" value="1"/>
</dbReference>
<dbReference type="NCBIfam" id="NF003518">
    <property type="entry name" value="PRK05182.2-4"/>
    <property type="match status" value="1"/>
</dbReference>
<dbReference type="NCBIfam" id="NF003519">
    <property type="entry name" value="PRK05182.2-5"/>
    <property type="match status" value="1"/>
</dbReference>
<dbReference type="NCBIfam" id="TIGR02027">
    <property type="entry name" value="rpoA"/>
    <property type="match status" value="1"/>
</dbReference>
<dbReference type="Pfam" id="PF01000">
    <property type="entry name" value="RNA_pol_A_bac"/>
    <property type="match status" value="1"/>
</dbReference>
<dbReference type="Pfam" id="PF03118">
    <property type="entry name" value="RNA_pol_A_CTD"/>
    <property type="match status" value="1"/>
</dbReference>
<dbReference type="Pfam" id="PF01193">
    <property type="entry name" value="RNA_pol_L"/>
    <property type="match status" value="1"/>
</dbReference>
<dbReference type="SMART" id="SM00662">
    <property type="entry name" value="RPOLD"/>
    <property type="match status" value="1"/>
</dbReference>
<dbReference type="SUPFAM" id="SSF47789">
    <property type="entry name" value="C-terminal domain of RNA polymerase alpha subunit"/>
    <property type="match status" value="1"/>
</dbReference>
<dbReference type="SUPFAM" id="SSF56553">
    <property type="entry name" value="Insert subdomain of RNA polymerase alpha subunit"/>
    <property type="match status" value="1"/>
</dbReference>
<dbReference type="SUPFAM" id="SSF55257">
    <property type="entry name" value="RBP11-like subunits of RNA polymerase"/>
    <property type="match status" value="1"/>
</dbReference>
<evidence type="ECO:0000255" key="1">
    <source>
        <dbReference type="HAMAP-Rule" id="MF_00059"/>
    </source>
</evidence>
<reference key="1">
    <citation type="journal article" date="2002" name="Proc. Natl. Acad. Sci. U.S.A.">
        <title>Genome sequence of a serotype M3 strain of group A Streptococcus: phage-encoded toxins, the high-virulence phenotype, and clone emergence.</title>
        <authorList>
            <person name="Beres S.B."/>
            <person name="Sylva G.L."/>
            <person name="Barbian K.D."/>
            <person name="Lei B."/>
            <person name="Hoff J.S."/>
            <person name="Mammarella N.D."/>
            <person name="Liu M.-Y."/>
            <person name="Smoot J.C."/>
            <person name="Porcella S.F."/>
            <person name="Parkins L.D."/>
            <person name="Campbell D.S."/>
            <person name="Smith T.M."/>
            <person name="McCormick J.K."/>
            <person name="Leung D.Y.M."/>
            <person name="Schlievert P.M."/>
            <person name="Musser J.M."/>
        </authorList>
    </citation>
    <scope>NUCLEOTIDE SEQUENCE [LARGE SCALE GENOMIC DNA]</scope>
    <source>
        <strain>ATCC BAA-595 / MGAS315</strain>
    </source>
</reference>
<proteinExistence type="inferred from homology"/>
<keyword id="KW-0240">DNA-directed RNA polymerase</keyword>
<keyword id="KW-0548">Nucleotidyltransferase</keyword>
<keyword id="KW-0804">Transcription</keyword>
<keyword id="KW-0808">Transferase</keyword>
<accession>P0DF28</accession>
<accession>Q8K8W9</accession>